<reference key="1">
    <citation type="submission" date="2007-12" db="EMBL/GenBank/DDBJ databases">
        <title>Brucella suis ATCC 23445 whole genome shotgun sequencing project.</title>
        <authorList>
            <person name="Setubal J.C."/>
            <person name="Bowns C."/>
            <person name="Boyle S."/>
            <person name="Crasta O.R."/>
            <person name="Czar M.J."/>
            <person name="Dharmanolla C."/>
            <person name="Gillespie J.J."/>
            <person name="Kenyon R.W."/>
            <person name="Lu J."/>
            <person name="Mane S."/>
            <person name="Mohapatra S."/>
            <person name="Nagrani S."/>
            <person name="Purkayastha A."/>
            <person name="Rajasimha H.K."/>
            <person name="Shallom J.M."/>
            <person name="Shallom S."/>
            <person name="Shukla M."/>
            <person name="Snyder E.E."/>
            <person name="Sobral B.W."/>
            <person name="Wattam A.R."/>
            <person name="Will R."/>
            <person name="Williams K."/>
            <person name="Yoo H."/>
            <person name="Bruce D."/>
            <person name="Detter C."/>
            <person name="Munk C."/>
            <person name="Brettin T.S."/>
        </authorList>
    </citation>
    <scope>NUCLEOTIDE SEQUENCE [LARGE SCALE GENOMIC DNA]</scope>
    <source>
        <strain>ATCC 23445 / NCTC 10510</strain>
    </source>
</reference>
<feature type="chain" id="PRO_1000085455" description="UPF0434 protein BSUIS_B0883">
    <location>
        <begin position="1"/>
        <end position="64"/>
    </location>
</feature>
<dbReference type="EMBL" id="CP000912">
    <property type="protein sequence ID" value="ABY39842.1"/>
    <property type="molecule type" value="Genomic_DNA"/>
</dbReference>
<dbReference type="RefSeq" id="WP_002965755.1">
    <property type="nucleotide sequence ID" value="NC_010167.1"/>
</dbReference>
<dbReference type="SMR" id="A9WVQ6"/>
<dbReference type="KEGG" id="bmt:BSUIS_B0883"/>
<dbReference type="HOGENOM" id="CLU_155659_2_2_5"/>
<dbReference type="Proteomes" id="UP000008545">
    <property type="component" value="Chromosome II"/>
</dbReference>
<dbReference type="GO" id="GO:0005829">
    <property type="term" value="C:cytosol"/>
    <property type="evidence" value="ECO:0007669"/>
    <property type="project" value="TreeGrafter"/>
</dbReference>
<dbReference type="FunFam" id="2.20.25.10:FF:000002">
    <property type="entry name" value="UPF0434 protein YcaR"/>
    <property type="match status" value="1"/>
</dbReference>
<dbReference type="Gene3D" id="2.20.25.10">
    <property type="match status" value="1"/>
</dbReference>
<dbReference type="HAMAP" id="MF_01187">
    <property type="entry name" value="UPF0434"/>
    <property type="match status" value="1"/>
</dbReference>
<dbReference type="InterPro" id="IPR005651">
    <property type="entry name" value="Trm112-like"/>
</dbReference>
<dbReference type="PANTHER" id="PTHR33505:SF4">
    <property type="entry name" value="PROTEIN PREY, MITOCHONDRIAL"/>
    <property type="match status" value="1"/>
</dbReference>
<dbReference type="PANTHER" id="PTHR33505">
    <property type="entry name" value="ZGC:162634"/>
    <property type="match status" value="1"/>
</dbReference>
<dbReference type="Pfam" id="PF03966">
    <property type="entry name" value="Trm112p"/>
    <property type="match status" value="1"/>
</dbReference>
<dbReference type="SUPFAM" id="SSF158997">
    <property type="entry name" value="Trm112p-like"/>
    <property type="match status" value="1"/>
</dbReference>
<protein>
    <recommendedName>
        <fullName evidence="1">UPF0434 protein BSUIS_B0883</fullName>
    </recommendedName>
</protein>
<evidence type="ECO:0000255" key="1">
    <source>
        <dbReference type="HAMAP-Rule" id="MF_01187"/>
    </source>
</evidence>
<gene>
    <name type="ordered locus">BSUIS_B0883</name>
</gene>
<organism>
    <name type="scientific">Brucella suis (strain ATCC 23445 / NCTC 10510)</name>
    <dbReference type="NCBI Taxonomy" id="470137"/>
    <lineage>
        <taxon>Bacteria</taxon>
        <taxon>Pseudomonadati</taxon>
        <taxon>Pseudomonadota</taxon>
        <taxon>Alphaproteobacteria</taxon>
        <taxon>Hyphomicrobiales</taxon>
        <taxon>Brucellaceae</taxon>
        <taxon>Brucella/Ochrobactrum group</taxon>
        <taxon>Brucella</taxon>
    </lineage>
</organism>
<sequence>MDDKVETGNIDVRLLELLVCPLTKGPLEYDAERSELVSRKARLAYPVRGGIPIMLPSEARSLTE</sequence>
<accession>A9WVQ6</accession>
<comment type="similarity">
    <text evidence="1">Belongs to the UPF0434 family.</text>
</comment>
<proteinExistence type="inferred from homology"/>
<name>Y3383_BRUSI</name>